<name>AZI2_MOUSE</name>
<dbReference type="EMBL" id="AB007141">
    <property type="protein sequence ID" value="BAA88213.1"/>
    <property type="molecule type" value="mRNA"/>
</dbReference>
<dbReference type="EMBL" id="AK004992">
    <property type="protein sequence ID" value="BAB23727.1"/>
    <property type="molecule type" value="mRNA"/>
</dbReference>
<dbReference type="EMBL" id="AK015942">
    <property type="protein sequence ID" value="BAB30044.1"/>
    <property type="molecule type" value="mRNA"/>
</dbReference>
<dbReference type="EMBL" id="AK030076">
    <property type="protein sequence ID" value="BAC26770.1"/>
    <property type="molecule type" value="mRNA"/>
</dbReference>
<dbReference type="EMBL" id="AK036102">
    <property type="protein sequence ID" value="BAE43294.1"/>
    <property type="molecule type" value="mRNA"/>
</dbReference>
<dbReference type="EMBL" id="AK153477">
    <property type="protein sequence ID" value="BAE32027.1"/>
    <property type="molecule type" value="mRNA"/>
</dbReference>
<dbReference type="EMBL" id="AK165549">
    <property type="protein sequence ID" value="BAE38249.1"/>
    <property type="molecule type" value="mRNA"/>
</dbReference>
<dbReference type="EMBL" id="AK167783">
    <property type="protein sequence ID" value="BAE39815.1"/>
    <property type="molecule type" value="mRNA"/>
</dbReference>
<dbReference type="EMBL" id="BC006851">
    <property type="protein sequence ID" value="AAH06851.1"/>
    <property type="molecule type" value="mRNA"/>
</dbReference>
<dbReference type="CCDS" id="CCDS40799.1">
    <molecule id="Q9QYP6-1"/>
</dbReference>
<dbReference type="CCDS" id="CCDS52959.1">
    <molecule id="Q9QYP6-2"/>
</dbReference>
<dbReference type="RefSeq" id="NP_001041611.1">
    <molecule id="Q9QYP6-2"/>
    <property type="nucleotide sequence ID" value="NM_001048146.2"/>
</dbReference>
<dbReference type="RefSeq" id="NP_001273436.1">
    <property type="nucleotide sequence ID" value="NM_001286507.1"/>
</dbReference>
<dbReference type="RefSeq" id="NP_001273437.1">
    <molecule id="Q9QYP6-1"/>
    <property type="nucleotide sequence ID" value="NM_001286508.1"/>
</dbReference>
<dbReference type="RefSeq" id="NP_038755.1">
    <molecule id="Q9QYP6-1"/>
    <property type="nucleotide sequence ID" value="NM_013727.4"/>
</dbReference>
<dbReference type="SMR" id="Q9QYP6"/>
<dbReference type="BioGRID" id="205136">
    <property type="interactions" value="5"/>
</dbReference>
<dbReference type="CORUM" id="Q9QYP6"/>
<dbReference type="FunCoup" id="Q9QYP6">
    <property type="interactions" value="1959"/>
</dbReference>
<dbReference type="IntAct" id="Q9QYP6">
    <property type="interactions" value="11"/>
</dbReference>
<dbReference type="STRING" id="10090.ENSMUSP00000044350"/>
<dbReference type="iPTMnet" id="Q9QYP6"/>
<dbReference type="PhosphoSitePlus" id="Q9QYP6"/>
<dbReference type="PaxDb" id="10090-ENSMUSP00000044350"/>
<dbReference type="PeptideAtlas" id="Q9QYP6"/>
<dbReference type="ProteomicsDB" id="273640">
    <molecule id="Q9QYP6-1"/>
</dbReference>
<dbReference type="ProteomicsDB" id="273641">
    <molecule id="Q9QYP6-2"/>
</dbReference>
<dbReference type="ProteomicsDB" id="273642">
    <molecule id="Q9QYP6-3"/>
</dbReference>
<dbReference type="Pumba" id="Q9QYP6"/>
<dbReference type="Antibodypedia" id="27537">
    <property type="antibodies" value="129 antibodies from 24 providers"/>
</dbReference>
<dbReference type="DNASU" id="27215"/>
<dbReference type="Ensembl" id="ENSMUST00000044454.12">
    <molecule id="Q9QYP6-1"/>
    <property type="protein sequence ID" value="ENSMUSP00000044350.6"/>
    <property type="gene ID" value="ENSMUSG00000039285.13"/>
</dbReference>
<dbReference type="Ensembl" id="ENSMUST00000133580.8">
    <molecule id="Q9QYP6-1"/>
    <property type="protein sequence ID" value="ENSMUSP00000118765.2"/>
    <property type="gene ID" value="ENSMUSG00000039285.13"/>
</dbReference>
<dbReference type="Ensembl" id="ENSMUST00000134433.8">
    <molecule id="Q9QYP6-2"/>
    <property type="protein sequence ID" value="ENSMUSP00000114980.2"/>
    <property type="gene ID" value="ENSMUSG00000039285.13"/>
</dbReference>
<dbReference type="Ensembl" id="ENSMUST00000154583.8">
    <molecule id="Q9QYP6-3"/>
    <property type="protein sequence ID" value="ENSMUSP00000122063.2"/>
    <property type="gene ID" value="ENSMUSG00000039285.13"/>
</dbReference>
<dbReference type="GeneID" id="27215"/>
<dbReference type="KEGG" id="mmu:27215"/>
<dbReference type="UCSC" id="uc009rzi.2">
    <molecule id="Q9QYP6-2"/>
    <property type="organism name" value="mouse"/>
</dbReference>
<dbReference type="UCSC" id="uc009rzj.2">
    <molecule id="Q9QYP6-1"/>
    <property type="organism name" value="mouse"/>
</dbReference>
<dbReference type="AGR" id="MGI:1351332"/>
<dbReference type="CTD" id="64343"/>
<dbReference type="MGI" id="MGI:1351332">
    <property type="gene designation" value="Azi2"/>
</dbReference>
<dbReference type="VEuPathDB" id="HostDB:ENSMUSG00000039285"/>
<dbReference type="eggNOG" id="ENOG502QV07">
    <property type="taxonomic scope" value="Eukaryota"/>
</dbReference>
<dbReference type="GeneTree" id="ENSGT00940000153704"/>
<dbReference type="HOGENOM" id="CLU_059745_0_0_1"/>
<dbReference type="InParanoid" id="Q9QYP6"/>
<dbReference type="OMA" id="PWPSQSC"/>
<dbReference type="OrthoDB" id="8744179at2759"/>
<dbReference type="PhylomeDB" id="Q9QYP6"/>
<dbReference type="TreeFam" id="TF331289"/>
<dbReference type="BioGRID-ORCS" id="27215">
    <property type="hits" value="11 hits in 77 CRISPR screens"/>
</dbReference>
<dbReference type="ChiTaRS" id="Azi2">
    <property type="organism name" value="mouse"/>
</dbReference>
<dbReference type="PRO" id="PR:Q9QYP6"/>
<dbReference type="Proteomes" id="UP000000589">
    <property type="component" value="Chromosome 9"/>
</dbReference>
<dbReference type="RNAct" id="Q9QYP6">
    <property type="molecule type" value="protein"/>
</dbReference>
<dbReference type="Bgee" id="ENSMUSG00000039285">
    <property type="expression patterns" value="Expressed in retinal neural layer and 261 other cell types or tissues"/>
</dbReference>
<dbReference type="ExpressionAtlas" id="Q9QYP6">
    <property type="expression patterns" value="baseline and differential"/>
</dbReference>
<dbReference type="GO" id="GO:0005737">
    <property type="term" value="C:cytoplasm"/>
    <property type="evidence" value="ECO:0000314"/>
    <property type="project" value="MGI"/>
</dbReference>
<dbReference type="GO" id="GO:0097028">
    <property type="term" value="P:dendritic cell differentiation"/>
    <property type="evidence" value="ECO:0000315"/>
    <property type="project" value="MGI"/>
</dbReference>
<dbReference type="GO" id="GO:0044565">
    <property type="term" value="P:dendritic cell proliferation"/>
    <property type="evidence" value="ECO:0000316"/>
    <property type="project" value="MGI"/>
</dbReference>
<dbReference type="GO" id="GO:0000278">
    <property type="term" value="P:mitotic cell cycle"/>
    <property type="evidence" value="ECO:0000315"/>
    <property type="project" value="MGI"/>
</dbReference>
<dbReference type="GO" id="GO:0043124">
    <property type="term" value="P:negative regulation of canonical NF-kappaB signal transduction"/>
    <property type="evidence" value="ECO:0000314"/>
    <property type="project" value="MGI"/>
</dbReference>
<dbReference type="GO" id="GO:0042110">
    <property type="term" value="P:T cell activation"/>
    <property type="evidence" value="ECO:0000314"/>
    <property type="project" value="MGI"/>
</dbReference>
<dbReference type="InterPro" id="IPR024581">
    <property type="entry name" value="TBD"/>
</dbReference>
<dbReference type="InterPro" id="IPR051891">
    <property type="entry name" value="TBK1-IKBKE_adapters"/>
</dbReference>
<dbReference type="PANTHER" id="PTHR14432:SF6">
    <property type="entry name" value="5-AZACYTIDINE-INDUCED PROTEIN 2"/>
    <property type="match status" value="1"/>
</dbReference>
<dbReference type="PANTHER" id="PTHR14432">
    <property type="entry name" value="PROSAPIP2 PROTEIN/5-AZACYTIDINE INDUCED GENE 2"/>
    <property type="match status" value="1"/>
</dbReference>
<dbReference type="Pfam" id="PF12845">
    <property type="entry name" value="TBD"/>
    <property type="match status" value="1"/>
</dbReference>
<feature type="chain" id="PRO_0000280604" description="5-azacytidine-induced protein 2">
    <location>
        <begin position="1"/>
        <end position="405"/>
    </location>
</feature>
<feature type="region of interest" description="Homodimerization" evidence="6">
    <location>
        <begin position="1"/>
        <end position="198"/>
    </location>
</feature>
<feature type="region of interest" description="Interaction with TBK1 and IKBKE" evidence="6">
    <location>
        <begin position="229"/>
        <end position="270"/>
    </location>
</feature>
<feature type="region of interest" description="Disordered" evidence="4">
    <location>
        <begin position="357"/>
        <end position="377"/>
    </location>
</feature>
<feature type="coiled-coil region" evidence="3">
    <location>
        <begin position="40"/>
        <end position="197"/>
    </location>
</feature>
<feature type="modified residue" description="Phosphoserine" evidence="1">
    <location>
        <position position="331"/>
    </location>
</feature>
<feature type="modified residue" description="Phosphoserine" evidence="2">
    <location>
        <position position="366"/>
    </location>
</feature>
<feature type="splice variant" id="VSP_023822" description="In isoform 3." evidence="9">
    <location>
        <begin position="115"/>
        <end position="405"/>
    </location>
</feature>
<feature type="splice variant" id="VSP_023823" description="In isoform 2." evidence="9">
    <original>ACTPVGCVEDLGRDS</original>
    <variation>GKSLLAANADSSQTA</variation>
    <location>
        <begin position="269"/>
        <end position="283"/>
    </location>
</feature>
<feature type="splice variant" id="VSP_023824" description="In isoform 2." evidence="9">
    <location>
        <begin position="284"/>
        <end position="405"/>
    </location>
</feature>
<feature type="mutagenesis site" description="Abolishes interaction with TBK1 but not with IKBKE." evidence="6">
    <original>Y</original>
    <variation>A</variation>
    <location>
        <position position="236"/>
    </location>
</feature>
<feature type="mutagenesis site" description="No effect on interaction with TBK1 and IKBKE." evidence="6">
    <original>W</original>
    <variation>A</variation>
    <location>
        <position position="237"/>
    </location>
</feature>
<feature type="mutagenesis site" description="No effect on interaction with TBK1 and IKBKE." evidence="6">
    <original>E</original>
    <variation>A</variation>
    <location>
        <position position="238"/>
    </location>
</feature>
<feature type="mutagenesis site" description="Abolishes interaction with TBK1 and IKBKE." evidence="6">
    <original>Q</original>
    <variation>A</variation>
    <location>
        <position position="253"/>
    </location>
</feature>
<feature type="mutagenesis site" description="Abolishes interaction with TBK1 and IKBKE." evidence="6">
    <original>L</original>
    <variation>A</variation>
    <location>
        <position position="257"/>
    </location>
</feature>
<evidence type="ECO:0000250" key="1">
    <source>
        <dbReference type="UniProtKB" id="Q4KMA0"/>
    </source>
</evidence>
<evidence type="ECO:0000250" key="2">
    <source>
        <dbReference type="UniProtKB" id="Q9H6S1"/>
    </source>
</evidence>
<evidence type="ECO:0000255" key="3"/>
<evidence type="ECO:0000256" key="4">
    <source>
        <dbReference type="SAM" id="MobiDB-lite"/>
    </source>
</evidence>
<evidence type="ECO:0000269" key="5">
    <source>
    </source>
</evidence>
<evidence type="ECO:0000269" key="6">
    <source>
    </source>
</evidence>
<evidence type="ECO:0000269" key="7">
    <source>
    </source>
</evidence>
<evidence type="ECO:0000303" key="8">
    <source>
    </source>
</evidence>
<evidence type="ECO:0000303" key="9">
    <source>
    </source>
</evidence>
<evidence type="ECO:0000303" key="10">
    <source>
    </source>
</evidence>
<evidence type="ECO:0000305" key="11"/>
<sequence length="405" mass="46091">MDTLVEDDICILNHEKAHRREAVTPLSAYPGDESVASHFALVTAYEDIKKRLKDSEKENSFLKKRIRALEERLVGARADEETSSVGREQVNKAYHAYREVCIDRDNLKNQLEKINKDNSESLKMLNEQLQSKEVELLQLRTEVETQQVMRNLNPPSSSWEVEKLSCDLKIHGLEQELGLLRKECSDLRTELQKARQTGPPQEDILQGRDVIRPSLSREEHVPHQGLHHSDNMQHAYWELKREMSNLHLVTQVQAELLRKLKTSAAVKKACTPVGCVEDLGRDSTKLHLTNFTATYKRHPSLSPNGKAPCYAPSSPLPGDRKVFSDKAVLQSWTDNERLVPNDGADFPEHSSYGRNSLEDNSWVFPSPPKSSETAFGENKSKILPLSNLPPLHYLDQQNQNCLYKS</sequence>
<accession>Q9QYP6</accession>
<accession>Q3TIN1</accession>
<accession>Q3V3R2</accession>
<accession>Q9CUI5</accession>
<reference key="1">
    <citation type="journal article" date="1999" name="Gene">
        <title>Isolation of the novel cDNA of a gene of which expression is induced by a demethylating stimulus.</title>
        <authorList>
            <person name="Miyagawa J."/>
            <person name="Muguruma M."/>
            <person name="Aoto H."/>
            <person name="Suetake I."/>
            <person name="Nakamura M."/>
            <person name="Tajima S."/>
        </authorList>
    </citation>
    <scope>NUCLEOTIDE SEQUENCE [MRNA] (ISOFORM 1)</scope>
    <scope>INDUCTION</scope>
    <scope>SUBCELLULAR LOCATION</scope>
    <scope>TISSUE SPECIFICITY</scope>
    <source>
        <tissue>Testis</tissue>
    </source>
</reference>
<reference key="2">
    <citation type="journal article" date="2005" name="Science">
        <title>The transcriptional landscape of the mammalian genome.</title>
        <authorList>
            <person name="Carninci P."/>
            <person name="Kasukawa T."/>
            <person name="Katayama S."/>
            <person name="Gough J."/>
            <person name="Frith M.C."/>
            <person name="Maeda N."/>
            <person name="Oyama R."/>
            <person name="Ravasi T."/>
            <person name="Lenhard B."/>
            <person name="Wells C."/>
            <person name="Kodzius R."/>
            <person name="Shimokawa K."/>
            <person name="Bajic V.B."/>
            <person name="Brenner S.E."/>
            <person name="Batalov S."/>
            <person name="Forrest A.R."/>
            <person name="Zavolan M."/>
            <person name="Davis M.J."/>
            <person name="Wilming L.G."/>
            <person name="Aidinis V."/>
            <person name="Allen J.E."/>
            <person name="Ambesi-Impiombato A."/>
            <person name="Apweiler R."/>
            <person name="Aturaliya R.N."/>
            <person name="Bailey T.L."/>
            <person name="Bansal M."/>
            <person name="Baxter L."/>
            <person name="Beisel K.W."/>
            <person name="Bersano T."/>
            <person name="Bono H."/>
            <person name="Chalk A.M."/>
            <person name="Chiu K.P."/>
            <person name="Choudhary V."/>
            <person name="Christoffels A."/>
            <person name="Clutterbuck D.R."/>
            <person name="Crowe M.L."/>
            <person name="Dalla E."/>
            <person name="Dalrymple B.P."/>
            <person name="de Bono B."/>
            <person name="Della Gatta G."/>
            <person name="di Bernardo D."/>
            <person name="Down T."/>
            <person name="Engstrom P."/>
            <person name="Fagiolini M."/>
            <person name="Faulkner G."/>
            <person name="Fletcher C.F."/>
            <person name="Fukushima T."/>
            <person name="Furuno M."/>
            <person name="Futaki S."/>
            <person name="Gariboldi M."/>
            <person name="Georgii-Hemming P."/>
            <person name="Gingeras T.R."/>
            <person name="Gojobori T."/>
            <person name="Green R.E."/>
            <person name="Gustincich S."/>
            <person name="Harbers M."/>
            <person name="Hayashi Y."/>
            <person name="Hensch T.K."/>
            <person name="Hirokawa N."/>
            <person name="Hill D."/>
            <person name="Huminiecki L."/>
            <person name="Iacono M."/>
            <person name="Ikeo K."/>
            <person name="Iwama A."/>
            <person name="Ishikawa T."/>
            <person name="Jakt M."/>
            <person name="Kanapin A."/>
            <person name="Katoh M."/>
            <person name="Kawasawa Y."/>
            <person name="Kelso J."/>
            <person name="Kitamura H."/>
            <person name="Kitano H."/>
            <person name="Kollias G."/>
            <person name="Krishnan S.P."/>
            <person name="Kruger A."/>
            <person name="Kummerfeld S.K."/>
            <person name="Kurochkin I.V."/>
            <person name="Lareau L.F."/>
            <person name="Lazarevic D."/>
            <person name="Lipovich L."/>
            <person name="Liu J."/>
            <person name="Liuni S."/>
            <person name="McWilliam S."/>
            <person name="Madan Babu M."/>
            <person name="Madera M."/>
            <person name="Marchionni L."/>
            <person name="Matsuda H."/>
            <person name="Matsuzawa S."/>
            <person name="Miki H."/>
            <person name="Mignone F."/>
            <person name="Miyake S."/>
            <person name="Morris K."/>
            <person name="Mottagui-Tabar S."/>
            <person name="Mulder N."/>
            <person name="Nakano N."/>
            <person name="Nakauchi H."/>
            <person name="Ng P."/>
            <person name="Nilsson R."/>
            <person name="Nishiguchi S."/>
            <person name="Nishikawa S."/>
            <person name="Nori F."/>
            <person name="Ohara O."/>
            <person name="Okazaki Y."/>
            <person name="Orlando V."/>
            <person name="Pang K.C."/>
            <person name="Pavan W.J."/>
            <person name="Pavesi G."/>
            <person name="Pesole G."/>
            <person name="Petrovsky N."/>
            <person name="Piazza S."/>
            <person name="Reed J."/>
            <person name="Reid J.F."/>
            <person name="Ring B.Z."/>
            <person name="Ringwald M."/>
            <person name="Rost B."/>
            <person name="Ruan Y."/>
            <person name="Salzberg S.L."/>
            <person name="Sandelin A."/>
            <person name="Schneider C."/>
            <person name="Schoenbach C."/>
            <person name="Sekiguchi K."/>
            <person name="Semple C.A."/>
            <person name="Seno S."/>
            <person name="Sessa L."/>
            <person name="Sheng Y."/>
            <person name="Shibata Y."/>
            <person name="Shimada H."/>
            <person name="Shimada K."/>
            <person name="Silva D."/>
            <person name="Sinclair B."/>
            <person name="Sperling S."/>
            <person name="Stupka E."/>
            <person name="Sugiura K."/>
            <person name="Sultana R."/>
            <person name="Takenaka Y."/>
            <person name="Taki K."/>
            <person name="Tammoja K."/>
            <person name="Tan S.L."/>
            <person name="Tang S."/>
            <person name="Taylor M.S."/>
            <person name="Tegner J."/>
            <person name="Teichmann S.A."/>
            <person name="Ueda H.R."/>
            <person name="van Nimwegen E."/>
            <person name="Verardo R."/>
            <person name="Wei C.L."/>
            <person name="Yagi K."/>
            <person name="Yamanishi H."/>
            <person name="Zabarovsky E."/>
            <person name="Zhu S."/>
            <person name="Zimmer A."/>
            <person name="Hide W."/>
            <person name="Bult C."/>
            <person name="Grimmond S.M."/>
            <person name="Teasdale R.D."/>
            <person name="Liu E.T."/>
            <person name="Brusic V."/>
            <person name="Quackenbush J."/>
            <person name="Wahlestedt C."/>
            <person name="Mattick J.S."/>
            <person name="Hume D.A."/>
            <person name="Kai C."/>
            <person name="Sasaki D."/>
            <person name="Tomaru Y."/>
            <person name="Fukuda S."/>
            <person name="Kanamori-Katayama M."/>
            <person name="Suzuki M."/>
            <person name="Aoki J."/>
            <person name="Arakawa T."/>
            <person name="Iida J."/>
            <person name="Imamura K."/>
            <person name="Itoh M."/>
            <person name="Kato T."/>
            <person name="Kawaji H."/>
            <person name="Kawagashira N."/>
            <person name="Kawashima T."/>
            <person name="Kojima M."/>
            <person name="Kondo S."/>
            <person name="Konno H."/>
            <person name="Nakano K."/>
            <person name="Ninomiya N."/>
            <person name="Nishio T."/>
            <person name="Okada M."/>
            <person name="Plessy C."/>
            <person name="Shibata K."/>
            <person name="Shiraki T."/>
            <person name="Suzuki S."/>
            <person name="Tagami M."/>
            <person name="Waki K."/>
            <person name="Watahiki A."/>
            <person name="Okamura-Oho Y."/>
            <person name="Suzuki H."/>
            <person name="Kawai J."/>
            <person name="Hayashizaki Y."/>
        </authorList>
    </citation>
    <scope>NUCLEOTIDE SEQUENCE [LARGE SCALE MRNA] (ISOFORMS 1; 2 AND 3)</scope>
    <source>
        <strain>C57BL/6J</strain>
        <strain>DBA/2J</strain>
        <tissue>Bone marrow</tissue>
        <tissue>Cerebellum</tissue>
        <tissue>Liver</tissue>
        <tissue>Testis</tissue>
    </source>
</reference>
<reference key="3">
    <citation type="journal article" date="2004" name="Genome Res.">
        <title>The status, quality, and expansion of the NIH full-length cDNA project: the Mammalian Gene Collection (MGC).</title>
        <authorList>
            <consortium name="The MGC Project Team"/>
        </authorList>
    </citation>
    <scope>NUCLEOTIDE SEQUENCE [LARGE SCALE MRNA] (ISOFORM 1)</scope>
    <source>
        <strain>FVB/N</strain>
        <tissue>Mammary tumor</tissue>
    </source>
</reference>
<reference key="4">
    <citation type="journal article" date="2007" name="EMBO J.">
        <title>SINTBAD, a novel component of innate antiviral immunity, shares a TBK1-binding domain with NAP1 and TANK.</title>
        <authorList>
            <person name="Ryzhakov G."/>
            <person name="Randow F."/>
        </authorList>
    </citation>
    <scope>FUNCTION</scope>
    <scope>INTERACTION WITH IKBKE AND TBK1</scope>
    <scope>SUBUNIT</scope>
    <scope>MUTAGENESIS OF TYR-236; TRP-237; GLU-238; GLN-253 AND LEU-257</scope>
</reference>
<reference key="5">
    <citation type="submission" date="2009-01" db="UniProtKB">
        <authorList>
            <person name="Lubec G."/>
            <person name="Sunyer B."/>
            <person name="Chen W.-Q."/>
        </authorList>
    </citation>
    <scope>PROTEIN SEQUENCE OF 241-258</scope>
    <scope>IDENTIFICATION BY MASS SPECTROMETRY</scope>
    <source>
        <strain>OF1</strain>
        <tissue>Hippocampus</tissue>
    </source>
</reference>
<reference key="6">
    <citation type="journal article" date="2012" name="J. Immunol.">
        <title>Tripartite motif-containing protein 38 negatively regulates TLR3/4- and RIG-I-mediated IFN-beta production and antiviral response by targeting NAP1.</title>
        <authorList>
            <person name="Zhao W."/>
            <person name="Wang L."/>
            <person name="Zhang M."/>
            <person name="Wang P."/>
            <person name="Yuan C."/>
            <person name="Qi J."/>
            <person name="Meng H."/>
            <person name="Gao C."/>
        </authorList>
    </citation>
    <scope>FUNCTION</scope>
    <scope>UBIQUITINATION</scope>
</reference>
<organism>
    <name type="scientific">Mus musculus</name>
    <name type="common">Mouse</name>
    <dbReference type="NCBI Taxonomy" id="10090"/>
    <lineage>
        <taxon>Eukaryota</taxon>
        <taxon>Metazoa</taxon>
        <taxon>Chordata</taxon>
        <taxon>Craniata</taxon>
        <taxon>Vertebrata</taxon>
        <taxon>Euteleostomi</taxon>
        <taxon>Mammalia</taxon>
        <taxon>Eutheria</taxon>
        <taxon>Euarchontoglires</taxon>
        <taxon>Glires</taxon>
        <taxon>Rodentia</taxon>
        <taxon>Myomorpha</taxon>
        <taxon>Muroidea</taxon>
        <taxon>Muridae</taxon>
        <taxon>Murinae</taxon>
        <taxon>Mus</taxon>
        <taxon>Mus</taxon>
    </lineage>
</organism>
<protein>
    <recommendedName>
        <fullName evidence="8">5-azacytidine-induced protein 2</fullName>
    </recommendedName>
    <alternativeName>
        <fullName evidence="10">NF-kappa-B-activating kinase-associated protein 1</fullName>
        <shortName evidence="10">Nak-associated protein 1</shortName>
        <shortName evidence="10">Nap1</shortName>
    </alternativeName>
</protein>
<gene>
    <name type="primary">Azi2</name>
    <name evidence="8" type="synonym">Az2</name>
    <name evidence="10" type="synonym">Nap1</name>
    <name type="synonym">Tbkp2</name>
</gene>
<proteinExistence type="evidence at protein level"/>
<keyword id="KW-0025">Alternative splicing</keyword>
<keyword id="KW-0175">Coiled coil</keyword>
<keyword id="KW-0963">Cytoplasm</keyword>
<keyword id="KW-0903">Direct protein sequencing</keyword>
<keyword id="KW-0597">Phosphoprotein</keyword>
<keyword id="KW-1185">Reference proteome</keyword>
<keyword id="KW-0832">Ubl conjugation</keyword>
<comment type="function">
    <text evidence="6 7">Adapter protein which binds TBK1 and IKBKE playing a role in antiviral innate immunity. Activates serine/threonine-protein kinase TBK1 and facilitates its oligomerization. Enhances the phosphorylation of NF-kappa-B p65 subunit RELA by TBK1. Promotes TBK1-induced as well as TNF-alpha or PMA-induced activation of NF-kappa-B. Participates in IFNB promoter activation via TICAM1.</text>
</comment>
<comment type="subunit">
    <text evidence="2 6">Homodimer (PubMed:17568778). Interacts with IKBKE and TBK1 (PubMed:17568778). Interacts with TICAM1 (By similarity). Interacts with TAX1BP1 (By similarity). Interacts with CALCOCO2 (By similarity).</text>
</comment>
<comment type="interaction">
    <interactant intactId="EBI-6115874">
        <id>Q9QYP6</id>
    </interactant>
    <interactant intactId="EBI-6115839">
        <id>O96018</id>
        <label>APBA3</label>
    </interactant>
    <organismsDiffer>true</organismsDiffer>
    <experiments>2</experiments>
</comment>
<comment type="interaction">
    <interactant intactId="EBI-6115874">
        <id>Q9QYP6</id>
    </interactant>
    <interactant intactId="EBI-2129148">
        <id>Q86YT6</id>
        <label>MIB1</label>
    </interactant>
    <organismsDiffer>true</organismsDiffer>
    <experiments>2</experiments>
</comment>
<comment type="interaction">
    <interactant intactId="EBI-6115874">
        <id>Q9QYP6</id>
    </interactant>
    <interactant intactId="EBI-2556166">
        <id>Q9NVV4</id>
        <label>MTPAP</label>
    </interactant>
    <organismsDiffer>true</organismsDiffer>
    <experiments>2</experiments>
</comment>
<comment type="interaction">
    <interactant intactId="EBI-6115874">
        <id>Q9QYP6</id>
    </interactant>
    <interactant intactId="EBI-5278391">
        <id>O75113</id>
        <label>N4BP1</label>
    </interactant>
    <organismsDiffer>true</organismsDiffer>
    <experiments>2</experiments>
</comment>
<comment type="interaction">
    <interactant intactId="EBI-6115874">
        <id>Q9QYP6</id>
    </interactant>
    <interactant intactId="EBI-948111">
        <id>Q96EP0</id>
        <label>RNF31</label>
    </interactant>
    <organismsDiffer>true</organismsDiffer>
    <experiments>2</experiments>
</comment>
<comment type="interaction">
    <interactant intactId="EBI-6115874">
        <id>Q9QYP6</id>
    </interactant>
    <interactant intactId="EBI-357631">
        <id>Q13114</id>
        <label>TRAF3</label>
    </interactant>
    <organismsDiffer>true</organismsDiffer>
    <experiments>2</experiments>
</comment>
<comment type="interaction">
    <interactant intactId="EBI-6115874">
        <id>Q9QYP6</id>
    </interactant>
    <interactant intactId="EBI-359793">
        <id>P40222</id>
        <label>TXLNA</label>
    </interactant>
    <organismsDiffer>true</organismsDiffer>
    <experiments>2</experiments>
</comment>
<comment type="subcellular location">
    <subcellularLocation>
        <location evidence="5">Cytoplasm</location>
    </subcellularLocation>
</comment>
<comment type="alternative products">
    <event type="alternative splicing"/>
    <isoform>
        <id>Q9QYP6-1</id>
        <name>1</name>
        <sequence type="displayed"/>
    </isoform>
    <isoform>
        <id>Q9QYP6-2</id>
        <name>2</name>
        <sequence type="described" ref="VSP_023823 VSP_023824"/>
    </isoform>
    <isoform>
        <id>Q9QYP6-3</id>
        <name>3</name>
        <sequence type="described" ref="VSP_023822"/>
    </isoform>
</comment>
<comment type="tissue specificity">
    <text evidence="5">Testis, ovary, heart, lung, kidney and brain. Expressed mainly in the spermatocytes or spermatids in the testis.</text>
</comment>
<comment type="induction">
    <text evidence="5">By 5-azacytidine.</text>
</comment>
<comment type="PTM">
    <text evidence="7">Ubiquitinated via 'Lys-48'-linked polyubiquitination by TRIM38, leading to its degradation.</text>
</comment>
<comment type="miscellaneous">
    <molecule>Isoform 3</molecule>
    <text evidence="11">May be produced at very low levels due to a premature stop codon in the mRNA, leading to nonsense-mediated mRNA decay.</text>
</comment>